<feature type="chain" id="PRO_1000013716" description="Sulfate transporter CysZ">
    <location>
        <begin position="1"/>
        <end position="250"/>
    </location>
</feature>
<feature type="transmembrane region" description="Helical" evidence="1">
    <location>
        <begin position="26"/>
        <end position="46"/>
    </location>
</feature>
<feature type="transmembrane region" description="Helical" evidence="1">
    <location>
        <begin position="71"/>
        <end position="91"/>
    </location>
</feature>
<feature type="transmembrane region" description="Helical" evidence="1">
    <location>
        <begin position="150"/>
        <end position="170"/>
    </location>
</feature>
<feature type="transmembrane region" description="Helical" evidence="1">
    <location>
        <begin position="211"/>
        <end position="231"/>
    </location>
</feature>
<proteinExistence type="inferred from homology"/>
<gene>
    <name evidence="1" type="primary">cysZ</name>
    <name type="ordered locus">Pfl01_0886</name>
</gene>
<protein>
    <recommendedName>
        <fullName evidence="1">Sulfate transporter CysZ</fullName>
    </recommendedName>
</protein>
<accession>Q3KHX7</accession>
<organism>
    <name type="scientific">Pseudomonas fluorescens (strain Pf0-1)</name>
    <dbReference type="NCBI Taxonomy" id="205922"/>
    <lineage>
        <taxon>Bacteria</taxon>
        <taxon>Pseudomonadati</taxon>
        <taxon>Pseudomonadota</taxon>
        <taxon>Gammaproteobacteria</taxon>
        <taxon>Pseudomonadales</taxon>
        <taxon>Pseudomonadaceae</taxon>
        <taxon>Pseudomonas</taxon>
    </lineage>
</organism>
<comment type="function">
    <text evidence="1">High affinity, high specificity proton-dependent sulfate transporter, which mediates sulfate uptake. Provides the sulfur source for the cysteine synthesis pathway.</text>
</comment>
<comment type="subcellular location">
    <subcellularLocation>
        <location evidence="1">Cell inner membrane</location>
        <topology evidence="1">Multi-pass membrane protein</topology>
    </subcellularLocation>
</comment>
<comment type="similarity">
    <text evidence="1">Belongs to the CysZ family.</text>
</comment>
<sequence length="250" mass="28301">MPAPVLSGPQYLREGLKLVLSPGLRLFVLLPLAINLVLFVGLIYLAGHQFSLWVDTLMPSLPEWLSFLSYILWPLFVVLVALMVFFTFTMLANVIAAPFNGFLAEKVEVVVRGTDDFPAFSWGELIAMIPRTLAREMRKLGYFLPRAIGLFILSFIPVVNIVAAPLWLLFGVWMMAIQYIDYPADNHKLGWNEMLAWLRQKRWQSMSFGGIVYLVLLIPVVNILMMPAAVAGATLFWVRERGAENLVTQR</sequence>
<evidence type="ECO:0000255" key="1">
    <source>
        <dbReference type="HAMAP-Rule" id="MF_00468"/>
    </source>
</evidence>
<keyword id="KW-0028">Amino-acid biosynthesis</keyword>
<keyword id="KW-0997">Cell inner membrane</keyword>
<keyword id="KW-1003">Cell membrane</keyword>
<keyword id="KW-0198">Cysteine biosynthesis</keyword>
<keyword id="KW-0472">Membrane</keyword>
<keyword id="KW-0764">Sulfate transport</keyword>
<keyword id="KW-0812">Transmembrane</keyword>
<keyword id="KW-1133">Transmembrane helix</keyword>
<keyword id="KW-0813">Transport</keyword>
<reference key="1">
    <citation type="journal article" date="2009" name="Genome Biol.">
        <title>Genomic and genetic analyses of diversity and plant interactions of Pseudomonas fluorescens.</title>
        <authorList>
            <person name="Silby M.W."/>
            <person name="Cerdeno-Tarraga A.M."/>
            <person name="Vernikos G.S."/>
            <person name="Giddens S.R."/>
            <person name="Jackson R.W."/>
            <person name="Preston G.M."/>
            <person name="Zhang X.-X."/>
            <person name="Moon C.D."/>
            <person name="Gehrig S.M."/>
            <person name="Godfrey S.A.C."/>
            <person name="Knight C.G."/>
            <person name="Malone J.G."/>
            <person name="Robinson Z."/>
            <person name="Spiers A.J."/>
            <person name="Harris S."/>
            <person name="Challis G.L."/>
            <person name="Yaxley A.M."/>
            <person name="Harris D."/>
            <person name="Seeger K."/>
            <person name="Murphy L."/>
            <person name="Rutter S."/>
            <person name="Squares R."/>
            <person name="Quail M.A."/>
            <person name="Saunders E."/>
            <person name="Mavromatis K."/>
            <person name="Brettin T.S."/>
            <person name="Bentley S.D."/>
            <person name="Hothersall J."/>
            <person name="Stephens E."/>
            <person name="Thomas C.M."/>
            <person name="Parkhill J."/>
            <person name="Levy S.B."/>
            <person name="Rainey P.B."/>
            <person name="Thomson N.R."/>
        </authorList>
    </citation>
    <scope>NUCLEOTIDE SEQUENCE [LARGE SCALE GENOMIC DNA]</scope>
    <source>
        <strain>Pf0-1</strain>
    </source>
</reference>
<dbReference type="EMBL" id="CP000094">
    <property type="protein sequence ID" value="ABA72629.1"/>
    <property type="molecule type" value="Genomic_DNA"/>
</dbReference>
<dbReference type="RefSeq" id="WP_011332493.1">
    <property type="nucleotide sequence ID" value="NC_007492.2"/>
</dbReference>
<dbReference type="SMR" id="Q3KHX7"/>
<dbReference type="KEGG" id="pfo:Pfl01_0886"/>
<dbReference type="eggNOG" id="COG2981">
    <property type="taxonomic scope" value="Bacteria"/>
</dbReference>
<dbReference type="HOGENOM" id="CLU_070331_1_0_6"/>
<dbReference type="Proteomes" id="UP000002704">
    <property type="component" value="Chromosome"/>
</dbReference>
<dbReference type="GO" id="GO:0005886">
    <property type="term" value="C:plasma membrane"/>
    <property type="evidence" value="ECO:0007669"/>
    <property type="project" value="UniProtKB-SubCell"/>
</dbReference>
<dbReference type="GO" id="GO:0009675">
    <property type="term" value="F:high-affinity sulfate:proton symporter activity"/>
    <property type="evidence" value="ECO:0007669"/>
    <property type="project" value="TreeGrafter"/>
</dbReference>
<dbReference type="GO" id="GO:0019344">
    <property type="term" value="P:cysteine biosynthetic process"/>
    <property type="evidence" value="ECO:0007669"/>
    <property type="project" value="UniProtKB-UniRule"/>
</dbReference>
<dbReference type="GO" id="GO:0000103">
    <property type="term" value="P:sulfate assimilation"/>
    <property type="evidence" value="ECO:0007669"/>
    <property type="project" value="InterPro"/>
</dbReference>
<dbReference type="HAMAP" id="MF_00468">
    <property type="entry name" value="CysZ"/>
    <property type="match status" value="1"/>
</dbReference>
<dbReference type="InterPro" id="IPR050480">
    <property type="entry name" value="CysZ_sulfate_transptr"/>
</dbReference>
<dbReference type="InterPro" id="IPR022985">
    <property type="entry name" value="Sulfate_CysZ"/>
</dbReference>
<dbReference type="NCBIfam" id="NF003433">
    <property type="entry name" value="PRK04949.1"/>
    <property type="match status" value="1"/>
</dbReference>
<dbReference type="PANTHER" id="PTHR37468">
    <property type="entry name" value="SULFATE TRANSPORTER CYSZ"/>
    <property type="match status" value="1"/>
</dbReference>
<dbReference type="PANTHER" id="PTHR37468:SF1">
    <property type="entry name" value="SULFATE TRANSPORTER CYSZ"/>
    <property type="match status" value="1"/>
</dbReference>
<dbReference type="Pfam" id="PF07264">
    <property type="entry name" value="EI24"/>
    <property type="match status" value="1"/>
</dbReference>
<name>CYSZ_PSEPF</name>